<name>CYF_LEPLM</name>
<gene>
    <name type="primary">petA</name>
</gene>
<organism>
    <name type="scientific">Leptolyngbya laminosa</name>
    <name type="common">Phormidium laminosum</name>
    <dbReference type="NCBI Taxonomy" id="477181"/>
    <lineage>
        <taxon>Bacteria</taxon>
        <taxon>Bacillati</taxon>
        <taxon>Cyanobacteriota</taxon>
        <taxon>Cyanophyceae</taxon>
        <taxon>Leptolyngbyales</taxon>
        <taxon>Leptolyngbyaceae</taxon>
        <taxon>Leptolyngbya group</taxon>
        <taxon>Leptolyngbya</taxon>
    </lineage>
</organism>
<sequence>MNFKVCSFPSRRQSIAAFVRVLMVILLTLGALVSSDVLLPQPAAAYPFWAQQNYANPREATGRIVCANCHLAAKPAEIEVPQAVLPDSVFKAVVKIPYDHSVQQVQADGSKGPLNVGAVLMLPEGFTIAPEDRIPEEMKEEVGPSYLFQPYADDKQNIVLVGPLPGDQYEEIVFPVLSPNPATNKSVAFGKYSIHLGANRGRGQIYPTGEKSNNAVYNASAAGVITAIAKADDGSAEVKIRTEDGTTIVDKIPAGPELIVSEGEEVAAGAALTNNPNVGGFGQKDTEIVLQSPNRVKGRIAFLAAITLTQILLVLKKKQVERVQAGRDDLLKAAFIAG</sequence>
<reference key="1">
    <citation type="journal article" date="1996" name="Biochim. Biophys. Acta">
        <title>Some characteristics of cytochrome f in the cyanobacterium Phormidium laminosum: its sequence and charge properties in the reaction with plastocyanin.</title>
        <authorList>
            <person name="Wagner M.J."/>
            <person name="Packer J.C.L."/>
            <person name="Howe C.J."/>
            <person name="Bendall D.S."/>
        </authorList>
    </citation>
    <scope>NUCLEOTIDE SEQUENCE [GENOMIC DNA]</scope>
</reference>
<reference key="2">
    <citation type="journal article" date="1999" name="Biochemistry">
        <title>Structure of the soluble domain of cytochrome f from the cyanobacterium Phormidium laminosum.</title>
        <authorList>
            <person name="Carrell C.J."/>
            <person name="Schlarb B.G."/>
            <person name="Bendall D.S."/>
            <person name="Howe C.J."/>
            <person name="Cramer W.A."/>
            <person name="Smith J.L."/>
        </authorList>
    </citation>
    <scope>X-RAY CRYSTALLOGRAPHY (1.9 ANGSTROMS) OF 46-295</scope>
    <scope>COFACTOR</scope>
</reference>
<feature type="signal peptide">
    <location>
        <begin position="1"/>
        <end position="45"/>
    </location>
</feature>
<feature type="chain" id="PRO_0000023845" description="Cytochrome f">
    <location>
        <begin position="46"/>
        <end position="338"/>
    </location>
</feature>
<feature type="transmembrane region" description="Helical" evidence="2">
    <location>
        <begin position="300"/>
        <end position="316"/>
    </location>
</feature>
<feature type="binding site" description="axial binding residue" evidence="3">
    <location>
        <position position="46"/>
    </location>
    <ligand>
        <name>heme</name>
        <dbReference type="ChEBI" id="CHEBI:30413"/>
    </ligand>
    <ligandPart>
        <name>Fe</name>
        <dbReference type="ChEBI" id="CHEBI:18248"/>
    </ligandPart>
</feature>
<feature type="binding site" description="covalent" evidence="3">
    <location>
        <position position="66"/>
    </location>
    <ligand>
        <name>heme</name>
        <dbReference type="ChEBI" id="CHEBI:30413"/>
    </ligand>
</feature>
<feature type="binding site" description="covalent" evidence="3">
    <location>
        <position position="69"/>
    </location>
    <ligand>
        <name>heme</name>
        <dbReference type="ChEBI" id="CHEBI:30413"/>
    </ligand>
</feature>
<feature type="binding site" description="axial binding residue" evidence="3">
    <location>
        <position position="70"/>
    </location>
    <ligand>
        <name>heme</name>
        <dbReference type="ChEBI" id="CHEBI:30413"/>
    </ligand>
    <ligandPart>
        <name>Fe</name>
        <dbReference type="ChEBI" id="CHEBI:18248"/>
    </ligandPart>
</feature>
<feature type="helix" evidence="5">
    <location>
        <begin position="47"/>
        <end position="53"/>
    </location>
</feature>
<feature type="strand" evidence="5">
    <location>
        <begin position="55"/>
        <end position="58"/>
    </location>
</feature>
<feature type="helix" evidence="5">
    <location>
        <begin position="65"/>
        <end position="68"/>
    </location>
</feature>
<feature type="strand" evidence="5">
    <location>
        <begin position="77"/>
        <end position="79"/>
    </location>
</feature>
<feature type="strand" evidence="5">
    <location>
        <begin position="82"/>
        <end position="84"/>
    </location>
</feature>
<feature type="strand" evidence="5">
    <location>
        <begin position="89"/>
        <end position="95"/>
    </location>
</feature>
<feature type="strand" evidence="5">
    <location>
        <begin position="109"/>
        <end position="112"/>
    </location>
</feature>
<feature type="strand" evidence="5">
    <location>
        <begin position="115"/>
        <end position="121"/>
    </location>
</feature>
<feature type="helix" evidence="5">
    <location>
        <begin position="131"/>
        <end position="133"/>
    </location>
</feature>
<feature type="turn" evidence="5">
    <location>
        <begin position="136"/>
        <end position="138"/>
    </location>
</feature>
<feature type="helix" evidence="5">
    <location>
        <begin position="139"/>
        <end position="141"/>
    </location>
</feature>
<feature type="helix" evidence="5">
    <location>
        <begin position="145"/>
        <end position="147"/>
    </location>
</feature>
<feature type="strand" evidence="5">
    <location>
        <begin position="149"/>
        <end position="152"/>
    </location>
</feature>
<feature type="strand" evidence="5">
    <location>
        <begin position="158"/>
        <end position="165"/>
    </location>
</feature>
<feature type="turn" evidence="5">
    <location>
        <begin position="166"/>
        <end position="168"/>
    </location>
</feature>
<feature type="strand" evidence="5">
    <location>
        <begin position="170"/>
        <end position="177"/>
    </location>
</feature>
<feature type="turn" evidence="5">
    <location>
        <begin position="181"/>
        <end position="183"/>
    </location>
</feature>
<feature type="strand" evidence="5">
    <location>
        <begin position="189"/>
        <end position="201"/>
    </location>
</feature>
<feature type="strand" evidence="5">
    <location>
        <begin position="213"/>
        <end position="215"/>
    </location>
</feature>
<feature type="strand" evidence="5">
    <location>
        <begin position="223"/>
        <end position="230"/>
    </location>
</feature>
<feature type="strand" evidence="5">
    <location>
        <begin position="236"/>
        <end position="241"/>
    </location>
</feature>
<feature type="strand" evidence="5">
    <location>
        <begin position="247"/>
        <end position="252"/>
    </location>
</feature>
<feature type="strand" evidence="5">
    <location>
        <begin position="254"/>
        <end position="256"/>
    </location>
</feature>
<feature type="strand" evidence="5">
    <location>
        <begin position="271"/>
        <end position="273"/>
    </location>
</feature>
<feature type="strand" evidence="5">
    <location>
        <begin position="280"/>
        <end position="290"/>
    </location>
</feature>
<dbReference type="EMBL" id="Y09612">
    <property type="protein sequence ID" value="CAA70824.1"/>
    <property type="molecule type" value="Genomic_DNA"/>
</dbReference>
<dbReference type="PDB" id="1CI3">
    <property type="method" value="X-ray"/>
    <property type="resolution" value="1.90 A"/>
    <property type="chains" value="M=46-294"/>
</dbReference>
<dbReference type="PDBsum" id="1CI3"/>
<dbReference type="SMR" id="P95522"/>
<dbReference type="EvolutionaryTrace" id="P95522"/>
<dbReference type="GO" id="GO:0031676">
    <property type="term" value="C:plasma membrane-derived thylakoid membrane"/>
    <property type="evidence" value="ECO:0007669"/>
    <property type="project" value="UniProtKB-SubCell"/>
</dbReference>
<dbReference type="GO" id="GO:0009055">
    <property type="term" value="F:electron transfer activity"/>
    <property type="evidence" value="ECO:0007669"/>
    <property type="project" value="UniProtKB-UniRule"/>
</dbReference>
<dbReference type="GO" id="GO:0020037">
    <property type="term" value="F:heme binding"/>
    <property type="evidence" value="ECO:0007669"/>
    <property type="project" value="InterPro"/>
</dbReference>
<dbReference type="GO" id="GO:0005506">
    <property type="term" value="F:iron ion binding"/>
    <property type="evidence" value="ECO:0007669"/>
    <property type="project" value="InterPro"/>
</dbReference>
<dbReference type="GO" id="GO:0015979">
    <property type="term" value="P:photosynthesis"/>
    <property type="evidence" value="ECO:0007669"/>
    <property type="project" value="UniProtKB-UniRule"/>
</dbReference>
<dbReference type="FunFam" id="2.60.40.830:FF:000001">
    <property type="entry name" value="Cytochrome f"/>
    <property type="match status" value="1"/>
</dbReference>
<dbReference type="Gene3D" id="2.40.50.100">
    <property type="match status" value="1"/>
</dbReference>
<dbReference type="Gene3D" id="2.60.40.830">
    <property type="entry name" value="Cytochrome f large domain"/>
    <property type="match status" value="1"/>
</dbReference>
<dbReference type="Gene3D" id="1.20.5.700">
    <property type="entry name" value="Single helix bin"/>
    <property type="match status" value="1"/>
</dbReference>
<dbReference type="HAMAP" id="MF_00610">
    <property type="entry name" value="Cytb6_f_cytF"/>
    <property type="match status" value="1"/>
</dbReference>
<dbReference type="InterPro" id="IPR024058">
    <property type="entry name" value="Cyt-f_TM"/>
</dbReference>
<dbReference type="InterPro" id="IPR002325">
    <property type="entry name" value="Cyt_f"/>
</dbReference>
<dbReference type="InterPro" id="IPR024094">
    <property type="entry name" value="Cyt_f_lg_dom"/>
</dbReference>
<dbReference type="InterPro" id="IPR036826">
    <property type="entry name" value="Cyt_f_lg_dom_sf"/>
</dbReference>
<dbReference type="InterPro" id="IPR011054">
    <property type="entry name" value="Rudment_hybrid_motif"/>
</dbReference>
<dbReference type="NCBIfam" id="NF002736">
    <property type="entry name" value="PRK02693.1"/>
    <property type="match status" value="1"/>
</dbReference>
<dbReference type="PANTHER" id="PTHR33288">
    <property type="match status" value="1"/>
</dbReference>
<dbReference type="PANTHER" id="PTHR33288:SF10">
    <property type="entry name" value="CYTOCHROME F"/>
    <property type="match status" value="1"/>
</dbReference>
<dbReference type="Pfam" id="PF01333">
    <property type="entry name" value="Apocytochr_F_C"/>
    <property type="match status" value="1"/>
</dbReference>
<dbReference type="Pfam" id="PF16639">
    <property type="entry name" value="Apocytochr_F_N"/>
    <property type="match status" value="1"/>
</dbReference>
<dbReference type="PRINTS" id="PR00610">
    <property type="entry name" value="CYTOCHROMEF"/>
</dbReference>
<dbReference type="SUPFAM" id="SSF103431">
    <property type="entry name" value="Cytochrome f subunit of the cytochrome b6f complex, transmembrane anchor"/>
    <property type="match status" value="1"/>
</dbReference>
<dbReference type="SUPFAM" id="SSF49441">
    <property type="entry name" value="Cytochrome f, large domain"/>
    <property type="match status" value="1"/>
</dbReference>
<dbReference type="SUPFAM" id="SSF51246">
    <property type="entry name" value="Rudiment single hybrid motif"/>
    <property type="match status" value="1"/>
</dbReference>
<dbReference type="PROSITE" id="PS51010">
    <property type="entry name" value="CYTF"/>
    <property type="match status" value="1"/>
</dbReference>
<accession>P95522</accession>
<comment type="function">
    <text evidence="1">Component of the cytochrome b6-f complex, which mediates electron transfer between photosystem II (PSII) and photosystem I (PSI), cyclic electron flow around PSI, and state transitions.</text>
</comment>
<comment type="cofactor">
    <cofactor evidence="3">
        <name>heme</name>
        <dbReference type="ChEBI" id="CHEBI:30413"/>
    </cofactor>
    <text evidence="3">Binds 1 heme group covalently.</text>
</comment>
<comment type="subunit">
    <text evidence="1">The 4 large subunits of the cytochrome b6-f complex are cytochrome b6, subunit IV (17 kDa polypeptide, PetD), cytochrome f and the Rieske protein, while the 4 small subunits are PetG, PetL, PetM and PetN. The complex functions as a dimer (By similarity).</text>
</comment>
<comment type="subcellular location">
    <subcellularLocation>
        <location evidence="1">Cellular thylakoid membrane</location>
        <topology evidence="1">Single-pass membrane protein</topology>
    </subcellularLocation>
</comment>
<comment type="similarity">
    <text evidence="4">Belongs to the cytochrome f family.</text>
</comment>
<protein>
    <recommendedName>
        <fullName>Cytochrome f</fullName>
    </recommendedName>
</protein>
<keyword id="KW-0002">3D-structure</keyword>
<keyword id="KW-0249">Electron transport</keyword>
<keyword id="KW-0349">Heme</keyword>
<keyword id="KW-0408">Iron</keyword>
<keyword id="KW-0472">Membrane</keyword>
<keyword id="KW-0479">Metal-binding</keyword>
<keyword id="KW-0602">Photosynthesis</keyword>
<keyword id="KW-0732">Signal</keyword>
<keyword id="KW-0793">Thylakoid</keyword>
<keyword id="KW-0812">Transmembrane</keyword>
<keyword id="KW-1133">Transmembrane helix</keyword>
<keyword id="KW-0813">Transport</keyword>
<proteinExistence type="evidence at protein level"/>
<evidence type="ECO:0000250" key="1"/>
<evidence type="ECO:0000255" key="2"/>
<evidence type="ECO:0000269" key="3">
    <source>
    </source>
</evidence>
<evidence type="ECO:0000305" key="4"/>
<evidence type="ECO:0007829" key="5">
    <source>
        <dbReference type="PDB" id="1CI3"/>
    </source>
</evidence>